<keyword id="KW-0877">Alternative promoter usage</keyword>
<keyword id="KW-1003">Cell membrane</keyword>
<keyword id="KW-0868">Chloride</keyword>
<keyword id="KW-0903">Direct protein sequencing</keyword>
<keyword id="KW-1015">Disulfide bond</keyword>
<keyword id="KW-0325">Glycoprotein</keyword>
<keyword id="KW-0406">Ion transport</keyword>
<keyword id="KW-0472">Membrane</keyword>
<keyword id="KW-0479">Metal-binding</keyword>
<keyword id="KW-0597">Phosphoprotein</keyword>
<keyword id="KW-0630">Potassium</keyword>
<keyword id="KW-0633">Potassium transport</keyword>
<keyword id="KW-1185">Reference proteome</keyword>
<keyword id="KW-0769">Symport</keyword>
<keyword id="KW-0812">Transmembrane</keyword>
<keyword id="KW-1133">Transmembrane helix</keyword>
<keyword id="KW-0813">Transport</keyword>
<protein>
    <recommendedName>
        <fullName>Solute carrier family 12 member 6</fullName>
    </recommendedName>
    <alternativeName>
        <fullName>Electroneutral potassium-chloride cotransporter 3</fullName>
    </alternativeName>
    <alternativeName>
        <fullName>K-Cl cotransporter 3</fullName>
    </alternativeName>
</protein>
<proteinExistence type="evidence at protein level"/>
<accession>Q924N4</accession>
<accession>A2AGK1</accession>
<accession>Q924N3</accession>
<evidence type="ECO:0000250" key="1">
    <source>
        <dbReference type="UniProtKB" id="Q9UHW9"/>
    </source>
</evidence>
<evidence type="ECO:0000250" key="2">
    <source>
        <dbReference type="UniProtKB" id="Q9UP95"/>
    </source>
</evidence>
<evidence type="ECO:0000255" key="3"/>
<evidence type="ECO:0000256" key="4">
    <source>
        <dbReference type="SAM" id="MobiDB-lite"/>
    </source>
</evidence>
<evidence type="ECO:0000269" key="5">
    <source>
    </source>
</evidence>
<evidence type="ECO:0000269" key="6">
    <source>
    </source>
</evidence>
<evidence type="ECO:0000269" key="7">
    <source>
    </source>
</evidence>
<evidence type="ECO:0000269" key="8">
    <source>
    </source>
</evidence>
<evidence type="ECO:0000269" key="9">
    <source>
    </source>
</evidence>
<evidence type="ECO:0000269" key="10">
    <source>
    </source>
</evidence>
<evidence type="ECO:0000269" key="11">
    <source>
    </source>
</evidence>
<evidence type="ECO:0000269" key="12">
    <source>
    </source>
</evidence>
<evidence type="ECO:0000303" key="13">
    <source>
    </source>
</evidence>
<evidence type="ECO:0000303" key="14">
    <source>
    </source>
</evidence>
<evidence type="ECO:0000305" key="15"/>
<evidence type="ECO:0000305" key="16">
    <source>
    </source>
</evidence>
<sequence length="1150" mass="127527">MHPPEATTKMSSVRFMVTPTKIDDIPGLSDTSPDLSSRSSSRVRFSSRESVPETSRSEPMSELSGATTSLATVALDPSSDRTSNPQDVTEDPSQNSITGEHSQLLDDGHKKARNAYLNNSNYEEGDEYFDKNLALFEEEMDTRPKVSSLLNRMANYTNLTQGAKEHEEAENITEGKKKPTKSPQMGTFMGVYLPCLQNIFGVILFLRLTWVVGTAGILQAFAIVLICCCCTMLTAISMSAIATNGVVPAGGSYFMISRALGPEFGGAVGLCFYLGTTFAAAMYILGAIEIFLVYIVPRAAIFRSDDALKESAAMLNNMRVYGTAFLVLMVLVVFIGVRYVNKFASLFLACVIVSILAIYAGAIKSSFAPPHFPVCMLGNRTLSSRHLDICSKTKEVDNMTVPSKLWGFFCNSSQFFNATCDEYFVHNNVISIQGIPGLASGIITENLWSNYLPKGEIIEKPSAKSSDVLGNLNHEYVLADITTSFTLLVGIFFPSVTGIMAGSNRSGDLKDAQKSIPIGTILAILTTSFVYLSNVVLFGACIEGVVLRDKFGDAVKGNLVVGTLSWPSPWVIVIGSFFSTCGAGLQSLTGAPRLLQAIAKDNIIPFLRVFGHSKANGEPTWALLLTAAIAELGILIASLDLVAPILSMFFLMCYLFVNLACALQTLLRTPNWRPRFRYYHWALSFMGMSICLALMFISSWYYAIVAMVIAGMIYKYIEYQGAEKEWGDGIRGLSLSAARFALLRLEEGPPHTKNWRPQLLVLLKLDEDLHVKHPRLLTFASQLKAGKGLTIVGSVIVGNFLENYGDALAAEQTIKHLMEAEKVKGFCQLVVAAKLKEGISHLIQSCGLGGMKHNTVVMGWPNGWRQSEDARAWKTFIGTVRVTTAAHLALLVAKNVSFFPSNVEQFSEGNIDVWWIVHDGGMLMLLPFLLKQHKVWRKCSIRIFTVAQLEDNSIQMKKDLATFLYHLRIEAEVEVVEMHDSDISAYTYERTLMMEQRSQMLRHMRLSKTERDREAQLVKDRNSMLRLTSIGSDEDEETETYQEKVHMTWTKDKYMASRGQKVKSMEGFQDLLNMRPDQSNVRRMHTAVKLNEVIVNKSHEAKLVLLNMPGPPRNPEGDENYMEFLEVLTEGLERVLLVRGGGSEVITIYS</sequence>
<name>S12A6_MOUSE</name>
<reference key="1">
    <citation type="journal article" date="2001" name="Neuroscience">
        <title>Localization of the K(+)-Cl(-) cotransporter, KCC3, in the central and peripheral nervous systems: expression in the choroid plexus, large neurons and white matter tracts.</title>
        <authorList>
            <person name="Pearson M.M."/>
            <person name="Lu J."/>
            <person name="Mount D.B."/>
            <person name="Delpire E."/>
        </authorList>
    </citation>
    <scope>NUCLEOTIDE SEQUENCE [MRNA] (ISOFORMS 1 AND 2)</scope>
    <scope>GLYCOSYLATION</scope>
    <source>
        <strain>C57BL/6J</strain>
    </source>
</reference>
<reference key="2">
    <citation type="journal article" date="2009" name="PLoS Biol.">
        <title>Lineage-specific biology revealed by a finished genome assembly of the mouse.</title>
        <authorList>
            <person name="Church D.M."/>
            <person name="Goodstadt L."/>
            <person name="Hillier L.W."/>
            <person name="Zody M.C."/>
            <person name="Goldstein S."/>
            <person name="She X."/>
            <person name="Bult C.J."/>
            <person name="Agarwala R."/>
            <person name="Cherry J.L."/>
            <person name="DiCuccio M."/>
            <person name="Hlavina W."/>
            <person name="Kapustin Y."/>
            <person name="Meric P."/>
            <person name="Maglott D."/>
            <person name="Birtle Z."/>
            <person name="Marques A.C."/>
            <person name="Graves T."/>
            <person name="Zhou S."/>
            <person name="Teague B."/>
            <person name="Potamousis K."/>
            <person name="Churas C."/>
            <person name="Place M."/>
            <person name="Herschleb J."/>
            <person name="Runnheim R."/>
            <person name="Forrest D."/>
            <person name="Amos-Landgraf J."/>
            <person name="Schwartz D.C."/>
            <person name="Cheng Z."/>
            <person name="Lindblad-Toh K."/>
            <person name="Eichler E.E."/>
            <person name="Ponting C.P."/>
        </authorList>
    </citation>
    <scope>NUCLEOTIDE SEQUENCE [LARGE SCALE GENOMIC DNA]</scope>
    <source>
        <strain>C57BL/6J</strain>
    </source>
</reference>
<reference key="3">
    <citation type="submission" date="2005-07" db="EMBL/GenBank/DDBJ databases">
        <authorList>
            <person name="Mural R.J."/>
            <person name="Adams M.D."/>
            <person name="Myers E.W."/>
            <person name="Smith H.O."/>
            <person name="Venter J.C."/>
        </authorList>
    </citation>
    <scope>NUCLEOTIDE SEQUENCE [LARGE SCALE GENOMIC DNA]</scope>
</reference>
<reference key="4">
    <citation type="submission" date="2007-04" db="UniProtKB">
        <authorList>
            <person name="Lubec G."/>
            <person name="Kang S.U."/>
        </authorList>
    </citation>
    <scope>PROTEIN SEQUENCE OF 601-608; 1054-1061 AND 1103-1113</scope>
    <scope>IDENTIFICATION BY MASS SPECTROMETRY</scope>
    <source>
        <strain>C57BL/6J</strain>
        <tissue>Brain</tissue>
    </source>
</reference>
<reference key="5">
    <citation type="journal article" date="1999" name="J. Biol. Chem.">
        <title>Cloning and characterization of KCC3 and KCC4, new members of the cation-chloride cotransporter gene family.</title>
        <authorList>
            <person name="Mount D.B."/>
            <person name="Mercado A."/>
            <person name="Song L."/>
            <person name="Xu J."/>
            <person name="George A.L. Jr."/>
            <person name="Delpire E."/>
            <person name="Gamba G."/>
        </authorList>
    </citation>
    <scope>FUNCTION</scope>
    <scope>TRANSPORTER ACTIVITY</scope>
    <scope>TISSUE SPECIFICITY</scope>
</reference>
<reference key="6">
    <citation type="journal article" date="2002" name="Nat. Genet.">
        <title>The K-Cl cotransporter KCC3 is mutant in a severe peripheral neuropathy associated with agenesis of the corpus callosum.</title>
        <authorList>
            <person name="Howard H.C."/>
            <person name="Mount D.B."/>
            <person name="Rochefort D."/>
            <person name="Byun N."/>
            <person name="Dupre N."/>
            <person name="Lu J."/>
            <person name="Fan X."/>
            <person name="Song L."/>
            <person name="Riviere J.-B."/>
            <person name="Prevost C."/>
            <person name="Horst J."/>
            <person name="Simonati A."/>
            <person name="Lemcke B."/>
            <person name="Welch R."/>
            <person name="England R."/>
            <person name="Zhan F.Q."/>
            <person name="Mercado A."/>
            <person name="Siesser W.B."/>
            <person name="George A.L. Jr."/>
            <person name="McDonald M.P."/>
            <person name="Bouchard J.-P."/>
            <person name="Mathieu J."/>
            <person name="Delpire E."/>
            <person name="Rouleau G.A."/>
        </authorList>
    </citation>
    <scope>TISSUE SPECIFICITY</scope>
    <scope>DISRUPTION PHENOTYPE</scope>
</reference>
<reference key="7">
    <citation type="journal article" date="2005" name="Am. J. Physiol.">
        <title>NH2-terminal heterogeneity in the KCC3 K+-Cl- cotransporter.</title>
        <authorList>
            <person name="Mercado A."/>
            <person name="Vazquez N."/>
            <person name="Song L."/>
            <person name="Cortes R."/>
            <person name="Enck A.H."/>
            <person name="Welch R."/>
            <person name="Delpire E."/>
            <person name="Gamba G."/>
            <person name="Mount D.B."/>
        </authorList>
    </citation>
    <scope>ALTERNATIVE PROMOTER USAGE</scope>
    <scope>TISSUE SPECIFICITY</scope>
    <scope>SUBCELLULAR LOCATION</scope>
</reference>
<reference key="8">
    <citation type="journal article" date="2008" name="Hum. Mol. Genet.">
        <title>HMSN/ACC truncation mutations disrupt brain-type creatine kinase-dependant activation of K+/Cl- co-transporter 3.</title>
        <authorList>
            <person name="Salin-Cantegrel A."/>
            <person name="Shekarabi M."/>
            <person name="Holbert S."/>
            <person name="Dion P."/>
            <person name="Rochefort D."/>
            <person name="Laganiere J."/>
            <person name="Dacal S."/>
            <person name="Hince P."/>
            <person name="Karemera L."/>
            <person name="Gaspar C."/>
            <person name="Lapointe J.Y."/>
            <person name="Rouleau G.A."/>
        </authorList>
    </citation>
    <scope>TISSUE SPECIFICITY</scope>
</reference>
<reference key="9">
    <citation type="journal article" date="2009" name="Immunity">
        <title>The phagosomal proteome in interferon-gamma-activated macrophages.</title>
        <authorList>
            <person name="Trost M."/>
            <person name="English L."/>
            <person name="Lemieux S."/>
            <person name="Courcelles M."/>
            <person name="Desjardins M."/>
            <person name="Thibault P."/>
        </authorList>
    </citation>
    <scope>IDENTIFICATION BY MASS SPECTROMETRY [LARGE SCALE ANALYSIS]</scope>
</reference>
<reference key="10">
    <citation type="journal article" date="2010" name="Cell">
        <title>A tissue-specific atlas of mouse protein phosphorylation and expression.</title>
        <authorList>
            <person name="Huttlin E.L."/>
            <person name="Jedrychowski M.P."/>
            <person name="Elias J.E."/>
            <person name="Goswami T."/>
            <person name="Rad R."/>
            <person name="Beausoleil S.A."/>
            <person name="Villen J."/>
            <person name="Haas W."/>
            <person name="Sowa M.E."/>
            <person name="Gygi S.P."/>
        </authorList>
    </citation>
    <scope>IDENTIFICATION BY MASS SPECTROMETRY [LARGE SCALE ANALYSIS]</scope>
    <source>
        <tissue>Lung</tissue>
    </source>
</reference>
<reference key="11">
    <citation type="journal article" date="2016" name="Sci. Signal.">
        <title>Peripheral motor neuropathy is associated with defective kinase regulation of the KCC3 cotransporter.</title>
        <authorList>
            <person name="Kahle K.T."/>
            <person name="Flores B."/>
            <person name="Bharucha-Goebel D."/>
            <person name="Zhang J."/>
            <person name="Donkervoort S."/>
            <person name="Hegde M."/>
            <person name="Hussain G."/>
            <person name="Duran D."/>
            <person name="Liang B."/>
            <person name="Sun D."/>
            <person name="Boennemann C.G."/>
            <person name="Delpire E."/>
        </authorList>
    </citation>
    <scope>MUTAGENESIS OF THR-991</scope>
</reference>
<reference key="12">
    <citation type="journal article" date="2019" name="Science">
        <title>Cryo-EM structures of the human cation-chloride cotransporter KCC1.</title>
        <authorList>
            <person name="Liu S."/>
            <person name="Chang S."/>
            <person name="Han B."/>
            <person name="Xu L."/>
            <person name="Zhang M."/>
            <person name="Zhao C."/>
            <person name="Yang W."/>
            <person name="Wang F."/>
            <person name="Li J."/>
            <person name="Delpire E."/>
            <person name="Ye S."/>
            <person name="Bai X.C."/>
            <person name="Guo J."/>
        </authorList>
    </citation>
    <scope>FUNCTION</scope>
    <scope>TRANSPORTER ACTIVITY</scope>
    <scope>MUTAGENESIS OF TYR-283; SER-495; THR-497 AND TYR-654</scope>
</reference>
<reference key="13">
    <citation type="journal article" date="2020" name="J. Med. Genet.">
        <title>De novo variants in SLC12A6 cause sporadic early-onset progressive sensorimotor neuropathy.</title>
        <authorList>
            <person name="Park J."/>
            <person name="Flores B.R."/>
            <person name="Scherer K."/>
            <person name="Kuepper H."/>
            <person name="Rossi M."/>
            <person name="Rupprich K."/>
            <person name="Rautenberg M."/>
            <person name="Deininger N."/>
            <person name="Weichselbaum A."/>
            <person name="Grimm A."/>
            <person name="Sturm M."/>
            <person name="Grasshoff U."/>
            <person name="Delpire E."/>
            <person name="Haack T.B."/>
        </authorList>
    </citation>
    <scope>MUTAGENESIS OF ARG-207 AND TYR-679</scope>
</reference>
<gene>
    <name type="primary">Slc12a6</name>
    <name type="synonym">Kcc3</name>
</gene>
<feature type="chain" id="PRO_0000178038" description="Solute carrier family 12 member 6">
    <location>
        <begin position="1"/>
        <end position="1150"/>
    </location>
</feature>
<feature type="topological domain" description="Cytoplasmic" evidence="15">
    <location>
        <begin position="1"/>
        <end position="135"/>
    </location>
</feature>
<feature type="transmembrane region" description="Discontinuously helical; Name=1" evidence="1">
    <location>
        <begin position="136"/>
        <end position="158"/>
    </location>
</feature>
<feature type="topological domain" description="Extracellular" evidence="15">
    <location>
        <begin position="159"/>
        <end position="165"/>
    </location>
</feature>
<feature type="transmembrane region" description="Helical; Name=2" evidence="1">
    <location>
        <begin position="166"/>
        <end position="188"/>
    </location>
</feature>
<feature type="topological domain" description="Cytoplasmic" evidence="15">
    <location>
        <begin position="189"/>
        <end position="211"/>
    </location>
</feature>
<feature type="transmembrane region" description="Helical; Name=3" evidence="1">
    <location>
        <begin position="212"/>
        <end position="245"/>
    </location>
</feature>
<feature type="topological domain" description="Extracellular" evidence="15">
    <location>
        <begin position="246"/>
        <end position="263"/>
    </location>
</feature>
<feature type="transmembrane region" description="Helical; Name=4" evidence="1">
    <location>
        <begin position="264"/>
        <end position="287"/>
    </location>
</feature>
<feature type="transmembrane region" description="Helical; Name=5" evidence="1">
    <location>
        <begin position="288"/>
        <end position="316"/>
    </location>
</feature>
<feature type="topological domain" description="Extracellular" evidence="15">
    <location>
        <begin position="317"/>
        <end position="433"/>
    </location>
</feature>
<feature type="transmembrane region" description="Helical; Name=6" evidence="1">
    <location>
        <begin position="434"/>
        <end position="454"/>
    </location>
</feature>
<feature type="topological domain" description="Cytoplasmic" evidence="15">
    <location>
        <begin position="455"/>
        <end position="464"/>
    </location>
</feature>
<feature type="transmembrane region" description="Helical; Name=7" evidence="1">
    <location>
        <begin position="465"/>
        <end position="487"/>
    </location>
</feature>
<feature type="topological domain" description="Extracellular" evidence="15">
    <location>
        <begin position="488"/>
        <end position="518"/>
    </location>
</feature>
<feature type="transmembrane region" description="Helical; Name=8" evidence="1">
    <location>
        <begin position="519"/>
        <end position="545"/>
    </location>
</feature>
<feature type="topological domain" description="Cytoplasmic" evidence="15">
    <location>
        <begin position="546"/>
        <end position="568"/>
    </location>
</feature>
<feature type="transmembrane region" description="Helical; Name=9" evidence="1">
    <location>
        <begin position="569"/>
        <end position="589"/>
    </location>
</feature>
<feature type="transmembrane region" description="Helical; Name=10" evidence="1">
    <location>
        <begin position="590"/>
        <end position="612"/>
    </location>
</feature>
<feature type="topological domain" description="Cytoplasmic" evidence="15">
    <location>
        <begin position="613"/>
        <end position="629"/>
    </location>
</feature>
<feature type="transmembrane region" description="Helical; Name=11" evidence="1">
    <location>
        <begin position="630"/>
        <end position="649"/>
    </location>
</feature>
<feature type="transmembrane region" description="Helical; Name=12" evidence="1">
    <location>
        <begin position="650"/>
        <end position="665"/>
    </location>
</feature>
<feature type="topological domain" description="Cytoplasmic" evidence="15">
    <location>
        <begin position="666"/>
        <end position="1150"/>
    </location>
</feature>
<feature type="region of interest" description="Disordered" evidence="4">
    <location>
        <begin position="1"/>
        <end position="108"/>
    </location>
</feature>
<feature type="region of interest" description="Disordered" evidence="4">
    <location>
        <begin position="161"/>
        <end position="181"/>
    </location>
</feature>
<feature type="region of interest" description="Scissor helix" evidence="1">
    <location>
        <begin position="682"/>
        <end position="691"/>
    </location>
</feature>
<feature type="compositionally biased region" description="Low complexity" evidence="4">
    <location>
        <begin position="28"/>
        <end position="45"/>
    </location>
</feature>
<feature type="compositionally biased region" description="Polar residues" evidence="4">
    <location>
        <begin position="80"/>
        <end position="101"/>
    </location>
</feature>
<feature type="compositionally biased region" description="Basic and acidic residues" evidence="4">
    <location>
        <begin position="163"/>
        <end position="177"/>
    </location>
</feature>
<feature type="binding site" evidence="1">
    <location>
        <position position="147"/>
    </location>
    <ligand>
        <name>K(+)</name>
        <dbReference type="ChEBI" id="CHEBI:29103"/>
    </ligand>
</feature>
<feature type="binding site" evidence="1">
    <location>
        <position position="148"/>
    </location>
    <ligand>
        <name>K(+)</name>
        <dbReference type="ChEBI" id="CHEBI:29103"/>
    </ligand>
</feature>
<feature type="binding site" evidence="1">
    <location>
        <position position="151"/>
    </location>
    <ligand>
        <name>chloride</name>
        <dbReference type="ChEBI" id="CHEBI:17996"/>
        <label>2</label>
    </ligand>
</feature>
<feature type="binding site" evidence="16">
    <location>
        <position position="283"/>
    </location>
    <ligand>
        <name>K(+)</name>
        <dbReference type="ChEBI" id="CHEBI:29103"/>
    </ligand>
</feature>
<feature type="binding site" evidence="1">
    <location>
        <position position="443"/>
    </location>
    <ligand>
        <name>chloride</name>
        <dbReference type="ChEBI" id="CHEBI:17996"/>
        <label>2</label>
    </ligand>
</feature>
<feature type="binding site" evidence="1">
    <location>
        <position position="443"/>
    </location>
    <ligand>
        <name>K(+)</name>
        <dbReference type="ChEBI" id="CHEBI:29103"/>
    </ligand>
</feature>
<feature type="binding site" evidence="1">
    <location>
        <position position="444"/>
    </location>
    <ligand>
        <name>chloride</name>
        <dbReference type="ChEBI" id="CHEBI:17996"/>
        <label>2</label>
    </ligand>
</feature>
<feature type="binding site" evidence="1">
    <location>
        <position position="444"/>
    </location>
    <ligand>
        <name>K(+)</name>
        <dbReference type="ChEBI" id="CHEBI:29103"/>
    </ligand>
</feature>
<feature type="binding site" evidence="1">
    <location>
        <position position="446"/>
    </location>
    <ligand>
        <name>K(+)</name>
        <dbReference type="ChEBI" id="CHEBI:29103"/>
    </ligand>
</feature>
<feature type="binding site" evidence="1">
    <location>
        <position position="447"/>
    </location>
    <ligand>
        <name>chloride</name>
        <dbReference type="ChEBI" id="CHEBI:17996"/>
        <label>1</label>
    </ligand>
</feature>
<feature type="binding site" evidence="1">
    <location>
        <position position="448"/>
    </location>
    <ligand>
        <name>chloride</name>
        <dbReference type="ChEBI" id="CHEBI:17996"/>
        <label>1</label>
    </ligand>
</feature>
<feature type="binding site" evidence="16">
    <location>
        <position position="497"/>
    </location>
    <ligand>
        <name>K(+)</name>
        <dbReference type="ChEBI" id="CHEBI:29103"/>
    </ligand>
</feature>
<feature type="binding site" evidence="1">
    <location>
        <position position="603"/>
    </location>
    <ligand>
        <name>chloride</name>
        <dbReference type="ChEBI" id="CHEBI:17996"/>
        <label>1</label>
    </ligand>
</feature>
<feature type="binding site" evidence="16">
    <location>
        <position position="654"/>
    </location>
    <ligand>
        <name>chloride</name>
        <dbReference type="ChEBI" id="CHEBI:17996"/>
        <label>1</label>
    </ligand>
</feature>
<feature type="binding site" evidence="16">
    <location>
        <position position="654"/>
    </location>
    <ligand>
        <name>chloride</name>
        <dbReference type="ChEBI" id="CHEBI:17996"/>
        <label>2</label>
    </ligand>
</feature>
<feature type="modified residue" description="Phosphoserine" evidence="1">
    <location>
        <position position="32"/>
    </location>
</feature>
<feature type="modified residue" description="Phosphoserine" evidence="1">
    <location>
        <position position="120"/>
    </location>
</feature>
<feature type="modified residue" description="Phosphoserine" evidence="1">
    <location>
        <position position="148"/>
    </location>
</feature>
<feature type="modified residue" description="Phosphoserine" evidence="1">
    <location>
        <position position="736"/>
    </location>
</feature>
<feature type="modified residue" description="Phosphothreonine" evidence="1">
    <location>
        <position position="778"/>
    </location>
</feature>
<feature type="modified residue" description="Phosphoserine" evidence="1">
    <location>
        <position position="981"/>
    </location>
</feature>
<feature type="modified residue" description="Phosphothreonine" evidence="1">
    <location>
        <position position="991"/>
    </location>
</feature>
<feature type="modified residue" description="Phosphoserine" evidence="1">
    <location>
        <position position="1023"/>
    </location>
</feature>
<feature type="modified residue" description="Phosphoserine" evidence="1">
    <location>
        <position position="1029"/>
    </location>
</feature>
<feature type="modified residue" description="Phosphoserine" evidence="1">
    <location>
        <position position="1032"/>
    </location>
</feature>
<feature type="modified residue" description="Phosphothreonine" evidence="1">
    <location>
        <position position="1048"/>
    </location>
</feature>
<feature type="modified residue" description="Phosphotyrosine" evidence="1">
    <location>
        <position position="1121"/>
    </location>
</feature>
<feature type="glycosylation site" description="N-linked (GlcNAc...) asparagine" evidence="3">
    <location>
        <position position="379"/>
    </location>
</feature>
<feature type="glycosylation site" description="N-linked (GlcNAc...) asparagine" evidence="3">
    <location>
        <position position="398"/>
    </location>
</feature>
<feature type="glycosylation site" description="N-linked (GlcNAc...) asparagine" evidence="3">
    <location>
        <position position="411"/>
    </location>
</feature>
<feature type="glycosylation site" description="N-linked (GlcNAc...) asparagine" evidence="3">
    <location>
        <position position="417"/>
    </location>
</feature>
<feature type="disulfide bond" evidence="2">
    <location>
        <begin position="375"/>
        <end position="390"/>
    </location>
</feature>
<feature type="disulfide bond" evidence="2">
    <location>
        <begin position="410"/>
        <end position="420"/>
    </location>
</feature>
<feature type="splice variant" id="VSP_006117" description="In isoform 2." evidence="13">
    <location>
        <begin position="1"/>
        <end position="51"/>
    </location>
</feature>
<feature type="splice variant" id="VSP_006118" description="In isoform 2." evidence="13">
    <original>PETSRSEPMSELSGATTSLATVALDPSSDRTSNPQDVTE</original>
    <variation>MPHFTVTKVEDPEEGAAGPLSPEPSSAEVKARIQDPQEP</variation>
    <location>
        <begin position="52"/>
        <end position="90"/>
    </location>
</feature>
<feature type="mutagenesis site" description="Loss of potassium-chloride cotransport activity in Xenopus laevis oocytes." evidence="11">
    <original>R</original>
    <variation>C</variation>
    <location>
        <position position="207"/>
    </location>
</feature>
<feature type="mutagenesis site" description="Loss of potassium-chloride cotransport activity in Xenopus laevis oocytes." evidence="11">
    <original>R</original>
    <variation>H</variation>
    <location>
        <position position="207"/>
    </location>
</feature>
<feature type="mutagenesis site" description="Abolished potassium-chloride cotransport." evidence="12">
    <original>Y</original>
    <variation>A</variation>
    <variation>F</variation>
    <location>
        <position position="283"/>
    </location>
</feature>
<feature type="mutagenesis site" description="Reduced potassium-chloride cotransport." evidence="12">
    <original>S</original>
    <variation>A</variation>
    <location>
        <position position="495"/>
    </location>
</feature>
<feature type="mutagenesis site" description="Abolished potassium-chloride cotransport." evidence="12">
    <original>T</original>
    <variation>A</variation>
    <location>
        <position position="497"/>
    </location>
</feature>
<feature type="mutagenesis site" description="Abolished potassium-chloride cotransport." evidence="12">
    <original>Y</original>
    <variation>A</variation>
    <variation>F</variation>
    <location>
        <position position="654"/>
    </location>
</feature>
<feature type="mutagenesis site" description="Reduced potassium-chloride cotransport activity in Xenopus laevis oocytes." evidence="11">
    <original>Y</original>
    <variation>C</variation>
    <location>
        <position position="679"/>
    </location>
</feature>
<feature type="mutagenesis site" description="Constitutively enhanced potassium-chloride cotransport activity. Significant locomotor deficits." evidence="10">
    <original>T</original>
    <variation>A</variation>
    <location>
        <position position="991"/>
    </location>
</feature>
<feature type="sequence conflict" description="In Ref. 1; AAK81895/AAK81896." evidence="15" ref="1">
    <original>W</original>
    <variation>R</variation>
    <location>
        <position position="914"/>
    </location>
</feature>
<organism>
    <name type="scientific">Mus musculus</name>
    <name type="common">Mouse</name>
    <dbReference type="NCBI Taxonomy" id="10090"/>
    <lineage>
        <taxon>Eukaryota</taxon>
        <taxon>Metazoa</taxon>
        <taxon>Chordata</taxon>
        <taxon>Craniata</taxon>
        <taxon>Vertebrata</taxon>
        <taxon>Euteleostomi</taxon>
        <taxon>Mammalia</taxon>
        <taxon>Eutheria</taxon>
        <taxon>Euarchontoglires</taxon>
        <taxon>Glires</taxon>
        <taxon>Rodentia</taxon>
        <taxon>Myomorpha</taxon>
        <taxon>Muroidea</taxon>
        <taxon>Muridae</taxon>
        <taxon>Murinae</taxon>
        <taxon>Mus</taxon>
        <taxon>Mus</taxon>
    </lineage>
</organism>
<comment type="function">
    <molecule>Isoform 1</molecule>
    <text evidence="5 12 15">Mediates electroneutral potassium-chloride cotransport when activated by cell swelling (PubMed:10347194, PubMed:31649201). May contribute to cell volume homeostasis in single cells (Probable).</text>
</comment>
<comment type="function">
    <molecule>Isoform 2</molecule>
    <text evidence="1">Mediates electroneutral potassium-chloride cotransport when activated by cell swelling (By similarity). May contribute to cell volume homeostasis in single cells (By similarity).</text>
</comment>
<comment type="catalytic activity">
    <reaction evidence="5 12">
        <text>K(+)(in) + chloride(in) = K(+)(out) + chloride(out)</text>
        <dbReference type="Rhea" id="RHEA:72427"/>
        <dbReference type="ChEBI" id="CHEBI:17996"/>
        <dbReference type="ChEBI" id="CHEBI:29103"/>
    </reaction>
</comment>
<comment type="activity regulation">
    <text evidence="1">Inhibited following phosphorylation by OXSR1/OSR1 and STK39/SPAK: phosphorylation takes place downstream of WNK kinases (WNK1, WNK2, WNK3 or WNK4) in response to hyperosmotic stress and subsequent cell shrinkage.</text>
</comment>
<comment type="subunit">
    <text evidence="1">Homodimer; adopts a domain-swap conformation at the scissor helices connecting the transmembrane domain and C-terminal domain (By similarity). Heterodimer with K-Cl cotransporter SLC12A5 (By similarity). Interacts (via C-terminus) with CKB; the interaction may be required for potassium-chloride cotransport activity (By similarity).</text>
</comment>
<comment type="interaction">
    <interactant intactId="EBI-620992">
        <id>Q924N4-1</id>
    </interactant>
    <interactant intactId="EBI-444764">
        <id>Q9Z1W9</id>
        <label>Stk39</label>
    </interactant>
    <organismsDiffer>false</organismsDiffer>
    <experiments>4</experiments>
</comment>
<comment type="subcellular location">
    <subcellularLocation>
        <location evidence="1">Cell membrane</location>
    </subcellularLocation>
    <subcellularLocation>
        <location evidence="8">Basolateral cell membrane</location>
        <topology evidence="8">Multi-pass membrane protein</topology>
    </subcellularLocation>
</comment>
<comment type="alternative products">
    <event type="alternative promoter"/>
    <isoform>
        <id>Q924N4-1</id>
        <name>1</name>
        <name evidence="14">KCC3a</name>
        <sequence type="displayed"/>
    </isoform>
    <isoform>
        <id>Q924N4-2</id>
        <name>2</name>
        <name evidence="14">KCC3b</name>
        <sequence type="described" ref="VSP_006117 VSP_006118"/>
    </isoform>
</comment>
<comment type="tissue specificity">
    <molecule>Isoform 1</molecule>
    <text evidence="5 7 8 9">Expressed in hippocampus and corpus callosum (at protein level) (PubMed:18566107). Highly expressed throughout the brain and detected at lower levels in kidney. Highly expressed in highly myelinated white matter of the brain, but not in gray matter. Detected in the corpus callosum, in packed cell layers of the hippocampus and in Purkinje neurons within the cerebellum. Highly expressed in white matter in the spinal cord, but not in dorsal root ganglia or sciatic nerve. Colocalizes with the oligodendrocyte marker CNP. Expressed in hippocampus in CA1, and to a lesser extent CA3 pyramidal cells (PubMed:12368912). Also expressed in cortex, mostly in large neurons and in the large cerebellar Purkinje cells (PubMed:12368912).</text>
</comment>
<comment type="tissue specificity">
    <molecule>Isoform 2</molecule>
    <text evidence="8">Highly expressed in kidney, but not detected in brain.</text>
</comment>
<comment type="domain">
    <molecule>Isoform 2</molecule>
    <text evidence="1">N-terminal loop binds to the intracellular vestibule of the transporter, arresting the transporter in an inhibited state.</text>
</comment>
<comment type="PTM">
    <text evidence="1">Phosphorylated, phosphorylation regulates transporter activity. Phosphorylated at Thr-991 and Thr-1048 by OXSR1/OSR1 and STK39/SPAK downstream of WNK kinases (WNK1, WNK2, WNK3 or WNK4), inhibiting the potassium-chloride cotransport activity.</text>
</comment>
<comment type="PTM">
    <text evidence="6">N-glycosylated.</text>
</comment>
<comment type="disease">
    <text evidence="7">Defects in Slc12a6 are a cause of locomotor abnormalities beginning at 2 weeks of age. Slc12a6 deficient mice show hypomyelination, decompaction of myelin, demyelination, axonal swelling and fiber degeneration.</text>
</comment>
<comment type="disruption phenotype">
    <text evidence="7">Locomotor abnormalities beginning at 2 weeks of age (PubMed:12368912). Hypomyelination, decompaction of myelin, demyelination, axonal swelling and fiber degeneration (PubMed:12368912).</text>
</comment>
<comment type="similarity">
    <text evidence="15">Belongs to the SLC12A transporter family. K/Cl co-transporter subfamily.</text>
</comment>
<dbReference type="EMBL" id="AF211854">
    <property type="protein sequence ID" value="AAK81895.1"/>
    <property type="molecule type" value="mRNA"/>
</dbReference>
<dbReference type="EMBL" id="AF211855">
    <property type="protein sequence ID" value="AAK81896.1"/>
    <property type="molecule type" value="mRNA"/>
</dbReference>
<dbReference type="EMBL" id="AL683897">
    <property type="status" value="NOT_ANNOTATED_CDS"/>
    <property type="molecule type" value="Genomic_DNA"/>
</dbReference>
<dbReference type="EMBL" id="AL713853">
    <property type="status" value="NOT_ANNOTATED_CDS"/>
    <property type="molecule type" value="Genomic_DNA"/>
</dbReference>
<dbReference type="EMBL" id="CH466519">
    <property type="protein sequence ID" value="EDL27838.1"/>
    <property type="molecule type" value="Genomic_DNA"/>
</dbReference>
<dbReference type="CCDS" id="CCDS16551.1">
    <molecule id="Q924N4-1"/>
</dbReference>
<dbReference type="CCDS" id="CCDS16552.1">
    <molecule id="Q924N4-2"/>
</dbReference>
<dbReference type="RefSeq" id="NP_598409.2">
    <molecule id="Q924N4-2"/>
    <property type="nucleotide sequence ID" value="NM_133648.2"/>
</dbReference>
<dbReference type="RefSeq" id="NP_598410.2">
    <molecule id="Q924N4-1"/>
    <property type="nucleotide sequence ID" value="NM_133649.2"/>
</dbReference>
<dbReference type="SMR" id="Q924N4"/>
<dbReference type="BioGRID" id="223518">
    <property type="interactions" value="3"/>
</dbReference>
<dbReference type="ELM" id="Q924N4"/>
<dbReference type="FunCoup" id="Q924N4">
    <property type="interactions" value="2015"/>
</dbReference>
<dbReference type="IntAct" id="Q924N4">
    <property type="interactions" value="4"/>
</dbReference>
<dbReference type="STRING" id="10090.ENSMUSP00000028549"/>
<dbReference type="GlyConnect" id="2731">
    <property type="glycosylation" value="1 N-Linked glycan (2 sites)"/>
</dbReference>
<dbReference type="GlyCosmos" id="Q924N4">
    <property type="glycosylation" value="3 sites, 1 glycan"/>
</dbReference>
<dbReference type="GlyGen" id="Q924N4">
    <property type="glycosylation" value="5 sites, 2 N-linked glycans (2 sites), 1 O-linked glycan (1 site)"/>
</dbReference>
<dbReference type="iPTMnet" id="Q924N4"/>
<dbReference type="PhosphoSitePlus" id="Q924N4"/>
<dbReference type="jPOST" id="Q924N4"/>
<dbReference type="PaxDb" id="10090-ENSMUSP00000028549"/>
<dbReference type="PeptideAtlas" id="Q924N4"/>
<dbReference type="ProteomicsDB" id="255437">
    <molecule id="Q924N4-1"/>
</dbReference>
<dbReference type="ProteomicsDB" id="255438">
    <molecule id="Q924N4-2"/>
</dbReference>
<dbReference type="DNASU" id="107723"/>
<dbReference type="Ensembl" id="ENSMUST00000028549.14">
    <molecule id="Q924N4-1"/>
    <property type="protein sequence ID" value="ENSMUSP00000028549.8"/>
    <property type="gene ID" value="ENSMUSG00000027130.16"/>
</dbReference>
<dbReference type="Ensembl" id="ENSMUST00000053666.8">
    <molecule id="Q924N4-2"/>
    <property type="protein sequence ID" value="ENSMUSP00000051490.8"/>
    <property type="gene ID" value="ENSMUSG00000027130.16"/>
</dbReference>
<dbReference type="GeneID" id="107723"/>
<dbReference type="KEGG" id="mmu:107723"/>
<dbReference type="UCSC" id="uc008lou.2">
    <molecule id="Q924N4-1"/>
    <property type="organism name" value="mouse"/>
</dbReference>
<dbReference type="UCSC" id="uc008low.2">
    <molecule id="Q924N4-2"/>
    <property type="organism name" value="mouse"/>
</dbReference>
<dbReference type="AGR" id="MGI:2135960"/>
<dbReference type="CTD" id="9990"/>
<dbReference type="MGI" id="MGI:2135960">
    <property type="gene designation" value="Slc12a6"/>
</dbReference>
<dbReference type="VEuPathDB" id="HostDB:ENSMUSG00000027130"/>
<dbReference type="eggNOG" id="KOG2082">
    <property type="taxonomic scope" value="Eukaryota"/>
</dbReference>
<dbReference type="GeneTree" id="ENSGT00940000160238"/>
<dbReference type="HOGENOM" id="CLU_001883_1_2_1"/>
<dbReference type="InParanoid" id="Q924N4"/>
<dbReference type="OMA" id="GDICARK"/>
<dbReference type="OrthoDB" id="2020542at2759"/>
<dbReference type="PhylomeDB" id="Q924N4"/>
<dbReference type="TreeFam" id="TF313657"/>
<dbReference type="Reactome" id="R-MMU-426117">
    <property type="pathway name" value="Cation-coupled Chloride cotransporters"/>
</dbReference>
<dbReference type="BioGRID-ORCS" id="107723">
    <property type="hits" value="3 hits in 77 CRISPR screens"/>
</dbReference>
<dbReference type="ChiTaRS" id="Slc12a6">
    <property type="organism name" value="mouse"/>
</dbReference>
<dbReference type="PRO" id="PR:Q924N4"/>
<dbReference type="Proteomes" id="UP000000589">
    <property type="component" value="Chromosome 2"/>
</dbReference>
<dbReference type="RNAct" id="Q924N4">
    <property type="molecule type" value="protein"/>
</dbReference>
<dbReference type="Bgee" id="ENSMUSG00000027130">
    <property type="expression patterns" value="Expressed in granulocyte and 242 other cell types or tissues"/>
</dbReference>
<dbReference type="ExpressionAtlas" id="Q924N4">
    <property type="expression patterns" value="baseline and differential"/>
</dbReference>
<dbReference type="GO" id="GO:0030424">
    <property type="term" value="C:axon"/>
    <property type="evidence" value="ECO:0000314"/>
    <property type="project" value="MGI"/>
</dbReference>
<dbReference type="GO" id="GO:0016323">
    <property type="term" value="C:basolateral plasma membrane"/>
    <property type="evidence" value="ECO:0000314"/>
    <property type="project" value="UniProtKB"/>
</dbReference>
<dbReference type="GO" id="GO:0005886">
    <property type="term" value="C:plasma membrane"/>
    <property type="evidence" value="ECO:0000314"/>
    <property type="project" value="UniProtKB"/>
</dbReference>
<dbReference type="GO" id="GO:0046872">
    <property type="term" value="F:metal ion binding"/>
    <property type="evidence" value="ECO:0007669"/>
    <property type="project" value="UniProtKB-KW"/>
</dbReference>
<dbReference type="GO" id="GO:0015379">
    <property type="term" value="F:potassium:chloride symporter activity"/>
    <property type="evidence" value="ECO:0000314"/>
    <property type="project" value="UniProtKB"/>
</dbReference>
<dbReference type="GO" id="GO:0019901">
    <property type="term" value="F:protein kinase binding"/>
    <property type="evidence" value="ECO:0000353"/>
    <property type="project" value="ARUK-UCL"/>
</dbReference>
<dbReference type="GO" id="GO:0006884">
    <property type="term" value="P:cell volume homeostasis"/>
    <property type="evidence" value="ECO:0007669"/>
    <property type="project" value="Ensembl"/>
</dbReference>
<dbReference type="GO" id="GO:0071477">
    <property type="term" value="P:cellular hypotonic salinity response"/>
    <property type="evidence" value="ECO:0000250"/>
    <property type="project" value="UniProtKB"/>
</dbReference>
<dbReference type="GO" id="GO:0071333">
    <property type="term" value="P:cellular response to glucose stimulus"/>
    <property type="evidence" value="ECO:0000314"/>
    <property type="project" value="MGI"/>
</dbReference>
<dbReference type="GO" id="GO:0055064">
    <property type="term" value="P:chloride ion homeostasis"/>
    <property type="evidence" value="ECO:0000314"/>
    <property type="project" value="UniProtKB"/>
</dbReference>
<dbReference type="GO" id="GO:0055075">
    <property type="term" value="P:potassium ion homeostasis"/>
    <property type="evidence" value="ECO:0000314"/>
    <property type="project" value="UniProtKB"/>
</dbReference>
<dbReference type="GO" id="GO:1990573">
    <property type="term" value="P:potassium ion import across plasma membrane"/>
    <property type="evidence" value="ECO:0007669"/>
    <property type="project" value="Ensembl"/>
</dbReference>
<dbReference type="GO" id="GO:0071805">
    <property type="term" value="P:potassium ion transmembrane transport"/>
    <property type="evidence" value="ECO:0000250"/>
    <property type="project" value="UniProtKB"/>
</dbReference>
<dbReference type="FunFam" id="1.20.1740.10:FF:000049">
    <property type="entry name" value="Solute carrier family 12 (potassium/chloride transporter), member 4"/>
    <property type="match status" value="1"/>
</dbReference>
<dbReference type="FunFam" id="1.20.1740.10:FF:000040">
    <property type="entry name" value="Solute carrier family 12 member 6"/>
    <property type="match status" value="1"/>
</dbReference>
<dbReference type="Gene3D" id="1.20.1740.10">
    <property type="entry name" value="Amino acid/polyamine transporter I"/>
    <property type="match status" value="1"/>
</dbReference>
<dbReference type="InterPro" id="IPR004841">
    <property type="entry name" value="AA-permease/SLC12A_dom"/>
</dbReference>
<dbReference type="InterPro" id="IPR000076">
    <property type="entry name" value="KCL_cotranspt"/>
</dbReference>
<dbReference type="InterPro" id="IPR018491">
    <property type="entry name" value="SLC12_C"/>
</dbReference>
<dbReference type="InterPro" id="IPR004842">
    <property type="entry name" value="SLC12A_fam"/>
</dbReference>
<dbReference type="NCBIfam" id="TIGR00930">
    <property type="entry name" value="2a30"/>
    <property type="match status" value="1"/>
</dbReference>
<dbReference type="PANTHER" id="PTHR11827:SF66">
    <property type="entry name" value="SOLUTE CARRIER FAMILY 12 MEMBER 6"/>
    <property type="match status" value="1"/>
</dbReference>
<dbReference type="PANTHER" id="PTHR11827">
    <property type="entry name" value="SOLUTE CARRIER FAMILY 12, CATION COTRANSPORTERS"/>
    <property type="match status" value="1"/>
</dbReference>
<dbReference type="Pfam" id="PF00324">
    <property type="entry name" value="AA_permease"/>
    <property type="match status" value="2"/>
</dbReference>
<dbReference type="Pfam" id="PF03522">
    <property type="entry name" value="SLC12"/>
    <property type="match status" value="2"/>
</dbReference>
<dbReference type="PRINTS" id="PR01081">
    <property type="entry name" value="KCLTRNSPORT"/>
</dbReference>